<name>R3HC1_HUMAN</name>
<dbReference type="EMBL" id="AC090197">
    <property type="status" value="NOT_ANNOTATED_CDS"/>
    <property type="molecule type" value="Genomic_DNA"/>
</dbReference>
<dbReference type="EMBL" id="CH471080">
    <property type="protein sequence ID" value="EAW63629.1"/>
    <property type="status" value="ALT_SEQ"/>
    <property type="molecule type" value="Genomic_DNA"/>
</dbReference>
<dbReference type="EMBL" id="CH471080">
    <property type="protein sequence ID" value="EAW63630.1"/>
    <property type="status" value="ALT_SEQ"/>
    <property type="molecule type" value="Genomic_DNA"/>
</dbReference>
<dbReference type="EMBL" id="BC143822">
    <property type="protein sequence ID" value="AAI43823.1"/>
    <property type="status" value="ALT_INIT"/>
    <property type="molecule type" value="mRNA"/>
</dbReference>
<dbReference type="EMBL" id="BC143829">
    <property type="protein sequence ID" value="AAI43830.1"/>
    <property type="status" value="ALT_INIT"/>
    <property type="molecule type" value="mRNA"/>
</dbReference>
<dbReference type="EMBL" id="AL050297">
    <property type="protein sequence ID" value="CAB43396.1"/>
    <property type="status" value="ALT_SEQ"/>
    <property type="molecule type" value="mRNA"/>
</dbReference>
<dbReference type="CCDS" id="CCDS47826.2">
    <molecule id="Q9Y3T6-1"/>
</dbReference>
<dbReference type="CCDS" id="CCDS78317.1">
    <molecule id="Q9Y3T6-3"/>
</dbReference>
<dbReference type="PIR" id="T08701">
    <property type="entry name" value="T08701"/>
</dbReference>
<dbReference type="RefSeq" id="NP_001129580.2">
    <molecule id="Q9Y3T6-1"/>
    <property type="nucleotide sequence ID" value="NM_001136108.3"/>
</dbReference>
<dbReference type="RefSeq" id="NP_001288579.1">
    <molecule id="Q9Y3T6-3"/>
    <property type="nucleotide sequence ID" value="NM_001301650.2"/>
</dbReference>
<dbReference type="SMR" id="Q9Y3T6"/>
<dbReference type="BioGRID" id="128445">
    <property type="interactions" value="8"/>
</dbReference>
<dbReference type="FunCoup" id="Q9Y3T6">
    <property type="interactions" value="778"/>
</dbReference>
<dbReference type="IntAct" id="Q9Y3T6">
    <property type="interactions" value="4"/>
</dbReference>
<dbReference type="STRING" id="9606.ENSP00000265806"/>
<dbReference type="GlyGen" id="Q9Y3T6">
    <property type="glycosylation" value="1 site, 1 O-linked glycan (1 site)"/>
</dbReference>
<dbReference type="iPTMnet" id="Q9Y3T6"/>
<dbReference type="PhosphoSitePlus" id="Q9Y3T6"/>
<dbReference type="BioMuta" id="R3HCC1"/>
<dbReference type="DMDM" id="160017981"/>
<dbReference type="jPOST" id="Q9Y3T6"/>
<dbReference type="MassIVE" id="Q9Y3T6"/>
<dbReference type="PaxDb" id="9606-ENSP00000265806"/>
<dbReference type="PeptideAtlas" id="Q9Y3T6"/>
<dbReference type="ProteomicsDB" id="86076">
    <molecule id="Q9Y3T6-1"/>
</dbReference>
<dbReference type="Pumba" id="Q9Y3T6"/>
<dbReference type="Antibodypedia" id="5331">
    <property type="antibodies" value="27 antibodies from 10 providers"/>
</dbReference>
<dbReference type="DNASU" id="203069"/>
<dbReference type="Ensembl" id="ENST00000265806.12">
    <molecule id="Q9Y3T6-1"/>
    <property type="protein sequence ID" value="ENSP00000265806.8"/>
    <property type="gene ID" value="ENSG00000104679.12"/>
</dbReference>
<dbReference type="Ensembl" id="ENST00000625275.3">
    <molecule id="Q9Y3T6-3"/>
    <property type="protein sequence ID" value="ENSP00000486278.2"/>
    <property type="gene ID" value="ENSG00000104679.12"/>
</dbReference>
<dbReference type="GeneID" id="203069"/>
<dbReference type="KEGG" id="hsa:203069"/>
<dbReference type="MANE-Select" id="ENST00000265806.12">
    <property type="protein sequence ID" value="ENSP00000265806.8"/>
    <property type="RefSeq nucleotide sequence ID" value="NM_001136108.3"/>
    <property type="RefSeq protein sequence ID" value="NP_001129580.2"/>
</dbReference>
<dbReference type="UCSC" id="uc003xdf.4">
    <molecule id="Q9Y3T6-1"/>
    <property type="organism name" value="human"/>
</dbReference>
<dbReference type="AGR" id="HGNC:27329"/>
<dbReference type="CTD" id="203069"/>
<dbReference type="DisGeNET" id="203069"/>
<dbReference type="GeneCards" id="R3HCC1"/>
<dbReference type="HGNC" id="HGNC:27329">
    <property type="gene designation" value="R3HCC1"/>
</dbReference>
<dbReference type="HPA" id="ENSG00000104679">
    <property type="expression patterns" value="Low tissue specificity"/>
</dbReference>
<dbReference type="neXtProt" id="NX_Q9Y3T6"/>
<dbReference type="OpenTargets" id="ENSG00000104679"/>
<dbReference type="PharmGKB" id="PA142671108"/>
<dbReference type="VEuPathDB" id="HostDB:ENSG00000104679"/>
<dbReference type="eggNOG" id="KOG4483">
    <property type="taxonomic scope" value="Eukaryota"/>
</dbReference>
<dbReference type="GeneTree" id="ENSGT00530000063711"/>
<dbReference type="InParanoid" id="Q9Y3T6"/>
<dbReference type="OrthoDB" id="5418203at2759"/>
<dbReference type="PAN-GO" id="Q9Y3T6">
    <property type="GO annotations" value="0 GO annotations based on evolutionary models"/>
</dbReference>
<dbReference type="TreeFam" id="TF324168"/>
<dbReference type="PathwayCommons" id="Q9Y3T6"/>
<dbReference type="SignaLink" id="Q9Y3T6"/>
<dbReference type="BioGRID-ORCS" id="203069">
    <property type="hits" value="19 hits in 1155 CRISPR screens"/>
</dbReference>
<dbReference type="ChiTaRS" id="R3HCC1">
    <property type="organism name" value="human"/>
</dbReference>
<dbReference type="GenomeRNAi" id="203069"/>
<dbReference type="Pharos" id="Q9Y3T6">
    <property type="development level" value="Tdark"/>
</dbReference>
<dbReference type="PRO" id="PR:Q9Y3T6"/>
<dbReference type="Proteomes" id="UP000005640">
    <property type="component" value="Chromosome 8"/>
</dbReference>
<dbReference type="RNAct" id="Q9Y3T6">
    <property type="molecule type" value="protein"/>
</dbReference>
<dbReference type="Bgee" id="ENSG00000104679">
    <property type="expression patterns" value="Expressed in C1 segment of cervical spinal cord and 211 other cell types or tissues"/>
</dbReference>
<dbReference type="ExpressionAtlas" id="Q9Y3T6">
    <property type="expression patterns" value="baseline and differential"/>
</dbReference>
<dbReference type="GO" id="GO:0003676">
    <property type="term" value="F:nucleic acid binding"/>
    <property type="evidence" value="ECO:0007669"/>
    <property type="project" value="InterPro"/>
</dbReference>
<dbReference type="CDD" id="cd02638">
    <property type="entry name" value="R3H_unknown_1"/>
    <property type="match status" value="1"/>
</dbReference>
<dbReference type="Gene3D" id="3.30.70.330">
    <property type="match status" value="1"/>
</dbReference>
<dbReference type="Gene3D" id="3.30.1370.50">
    <property type="entry name" value="R3H-like domain"/>
    <property type="match status" value="1"/>
</dbReference>
<dbReference type="InterPro" id="IPR012677">
    <property type="entry name" value="Nucleotide-bd_a/b_plait_sf"/>
</dbReference>
<dbReference type="InterPro" id="IPR001374">
    <property type="entry name" value="R3H_dom"/>
</dbReference>
<dbReference type="InterPro" id="IPR036867">
    <property type="entry name" value="R3H_dom_sf"/>
</dbReference>
<dbReference type="InterPro" id="IPR039884">
    <property type="entry name" value="R3HC1/R3HCL"/>
</dbReference>
<dbReference type="PANTHER" id="PTHR21678">
    <property type="entry name" value="GROWTH INHIBITION AND DIFFERENTIATION RELATED PROTEIN 88"/>
    <property type="match status" value="1"/>
</dbReference>
<dbReference type="PANTHER" id="PTHR21678:SF6">
    <property type="entry name" value="R3H AND COILED-COIL DOMAIN-CONTAINING PROTEIN 1"/>
    <property type="match status" value="1"/>
</dbReference>
<dbReference type="Pfam" id="PF01424">
    <property type="entry name" value="R3H"/>
    <property type="match status" value="1"/>
</dbReference>
<dbReference type="SMART" id="SM00393">
    <property type="entry name" value="R3H"/>
    <property type="match status" value="1"/>
</dbReference>
<dbReference type="SUPFAM" id="SSF82708">
    <property type="entry name" value="R3H domain"/>
    <property type="match status" value="1"/>
</dbReference>
<dbReference type="PROSITE" id="PS51061">
    <property type="entry name" value="R3H"/>
    <property type="match status" value="1"/>
</dbReference>
<organism>
    <name type="scientific">Homo sapiens</name>
    <name type="common">Human</name>
    <dbReference type="NCBI Taxonomy" id="9606"/>
    <lineage>
        <taxon>Eukaryota</taxon>
        <taxon>Metazoa</taxon>
        <taxon>Chordata</taxon>
        <taxon>Craniata</taxon>
        <taxon>Vertebrata</taxon>
        <taxon>Euteleostomi</taxon>
        <taxon>Mammalia</taxon>
        <taxon>Eutheria</taxon>
        <taxon>Euarchontoglires</taxon>
        <taxon>Primates</taxon>
        <taxon>Haplorrhini</taxon>
        <taxon>Catarrhini</taxon>
        <taxon>Hominidae</taxon>
        <taxon>Homo</taxon>
    </lineage>
</organism>
<reference key="1">
    <citation type="journal article" date="2006" name="Nature">
        <title>DNA sequence and analysis of human chromosome 8.</title>
        <authorList>
            <person name="Nusbaum C."/>
            <person name="Mikkelsen T.S."/>
            <person name="Zody M.C."/>
            <person name="Asakawa S."/>
            <person name="Taudien S."/>
            <person name="Garber M."/>
            <person name="Kodira C.D."/>
            <person name="Schueler M.G."/>
            <person name="Shimizu A."/>
            <person name="Whittaker C.A."/>
            <person name="Chang J.L."/>
            <person name="Cuomo C.A."/>
            <person name="Dewar K."/>
            <person name="FitzGerald M.G."/>
            <person name="Yang X."/>
            <person name="Allen N.R."/>
            <person name="Anderson S."/>
            <person name="Asakawa T."/>
            <person name="Blechschmidt K."/>
            <person name="Bloom T."/>
            <person name="Borowsky M.L."/>
            <person name="Butler J."/>
            <person name="Cook A."/>
            <person name="Corum B."/>
            <person name="DeArellano K."/>
            <person name="DeCaprio D."/>
            <person name="Dooley K.T."/>
            <person name="Dorris L. III"/>
            <person name="Engels R."/>
            <person name="Gloeckner G."/>
            <person name="Hafez N."/>
            <person name="Hagopian D.S."/>
            <person name="Hall J.L."/>
            <person name="Ishikawa S.K."/>
            <person name="Jaffe D.B."/>
            <person name="Kamat A."/>
            <person name="Kudoh J."/>
            <person name="Lehmann R."/>
            <person name="Lokitsang T."/>
            <person name="Macdonald P."/>
            <person name="Major J.E."/>
            <person name="Matthews C.D."/>
            <person name="Mauceli E."/>
            <person name="Menzel U."/>
            <person name="Mihalev A.H."/>
            <person name="Minoshima S."/>
            <person name="Murayama Y."/>
            <person name="Naylor J.W."/>
            <person name="Nicol R."/>
            <person name="Nguyen C."/>
            <person name="O'Leary S.B."/>
            <person name="O'Neill K."/>
            <person name="Parker S.C.J."/>
            <person name="Polley A."/>
            <person name="Raymond C.K."/>
            <person name="Reichwald K."/>
            <person name="Rodriguez J."/>
            <person name="Sasaki T."/>
            <person name="Schilhabel M."/>
            <person name="Siddiqui R."/>
            <person name="Smith C.L."/>
            <person name="Sneddon T.P."/>
            <person name="Talamas J.A."/>
            <person name="Tenzin P."/>
            <person name="Topham K."/>
            <person name="Venkataraman V."/>
            <person name="Wen G."/>
            <person name="Yamazaki S."/>
            <person name="Young S.K."/>
            <person name="Zeng Q."/>
            <person name="Zimmer A.R."/>
            <person name="Rosenthal A."/>
            <person name="Birren B.W."/>
            <person name="Platzer M."/>
            <person name="Shimizu N."/>
            <person name="Lander E.S."/>
        </authorList>
    </citation>
    <scope>NUCLEOTIDE SEQUENCE [LARGE SCALE GENOMIC DNA]</scope>
</reference>
<reference key="2">
    <citation type="submission" date="2005-09" db="EMBL/GenBank/DDBJ databases">
        <authorList>
            <person name="Mural R.J."/>
            <person name="Istrail S."/>
            <person name="Sutton G.G."/>
            <person name="Florea L."/>
            <person name="Halpern A.L."/>
            <person name="Mobarry C.M."/>
            <person name="Lippert R."/>
            <person name="Walenz B."/>
            <person name="Shatkay H."/>
            <person name="Dew I."/>
            <person name="Miller J.R."/>
            <person name="Flanigan M.J."/>
            <person name="Edwards N.J."/>
            <person name="Bolanos R."/>
            <person name="Fasulo D."/>
            <person name="Halldorsson B.V."/>
            <person name="Hannenhalli S."/>
            <person name="Turner R."/>
            <person name="Yooseph S."/>
            <person name="Lu F."/>
            <person name="Nusskern D.R."/>
            <person name="Shue B.C."/>
            <person name="Zheng X.H."/>
            <person name="Zhong F."/>
            <person name="Delcher A.L."/>
            <person name="Huson D.H."/>
            <person name="Kravitz S.A."/>
            <person name="Mouchard L."/>
            <person name="Reinert K."/>
            <person name="Remington K.A."/>
            <person name="Clark A.G."/>
            <person name="Waterman M.S."/>
            <person name="Eichler E.E."/>
            <person name="Adams M.D."/>
            <person name="Hunkapiller M.W."/>
            <person name="Myers E.W."/>
            <person name="Venter J.C."/>
        </authorList>
    </citation>
    <scope>NUCLEOTIDE SEQUENCE [LARGE SCALE GENOMIC DNA]</scope>
</reference>
<reference key="3">
    <citation type="journal article" date="2004" name="Genome Res.">
        <title>The status, quality, and expansion of the NIH full-length cDNA project: the Mammalian Gene Collection (MGC).</title>
        <authorList>
            <consortium name="The MGC Project Team"/>
        </authorList>
    </citation>
    <scope>NUCLEOTIDE SEQUENCE [LARGE SCALE MRNA] (ISOFORMS 1 AND 2)</scope>
</reference>
<reference key="4">
    <citation type="journal article" date="2007" name="BMC Genomics">
        <title>The full-ORF clone resource of the German cDNA consortium.</title>
        <authorList>
            <person name="Bechtel S."/>
            <person name="Rosenfelder H."/>
            <person name="Duda A."/>
            <person name="Schmidt C.P."/>
            <person name="Ernst U."/>
            <person name="Wellenreuther R."/>
            <person name="Mehrle A."/>
            <person name="Schuster C."/>
            <person name="Bahr A."/>
            <person name="Bloecker H."/>
            <person name="Heubner D."/>
            <person name="Hoerlein A."/>
            <person name="Michel G."/>
            <person name="Wedler H."/>
            <person name="Koehrer K."/>
            <person name="Ottenwaelder B."/>
            <person name="Poustka A."/>
            <person name="Wiemann S."/>
            <person name="Schupp I."/>
        </authorList>
    </citation>
    <scope>NUCLEOTIDE SEQUENCE [LARGE SCALE MRNA] OF 1-429 (ISOFORM 1)</scope>
    <source>
        <tissue>Brain</tissue>
    </source>
</reference>
<reference key="5">
    <citation type="journal article" date="2011" name="BMC Syst. Biol.">
        <title>Initial characterization of the human central proteome.</title>
        <authorList>
            <person name="Burkard T.R."/>
            <person name="Planyavsky M."/>
            <person name="Kaupe I."/>
            <person name="Breitwieser F.P."/>
            <person name="Buerckstuemmer T."/>
            <person name="Bennett K.L."/>
            <person name="Superti-Furga G."/>
            <person name="Colinge J."/>
        </authorList>
    </citation>
    <scope>IDENTIFICATION BY MASS SPECTROMETRY [LARGE SCALE ANALYSIS]</scope>
</reference>
<reference key="6">
    <citation type="journal article" date="2013" name="J. Proteome Res.">
        <title>Toward a comprehensive characterization of a human cancer cell phosphoproteome.</title>
        <authorList>
            <person name="Zhou H."/>
            <person name="Di Palma S."/>
            <person name="Preisinger C."/>
            <person name="Peng M."/>
            <person name="Polat A.N."/>
            <person name="Heck A.J."/>
            <person name="Mohammed S."/>
        </authorList>
    </citation>
    <scope>PHOSPHORYLATION [LARGE SCALE ANALYSIS] AT SER-236</scope>
    <scope>IDENTIFICATION BY MASS SPECTROMETRY [LARGE SCALE ANALYSIS]</scope>
    <source>
        <tissue>Cervix carcinoma</tissue>
        <tissue>Erythroleukemia</tissue>
    </source>
</reference>
<protein>
    <recommendedName>
        <fullName evidence="6">R3H and coiled-coil domain-containing protein 1</fullName>
    </recommendedName>
</protein>
<accession>Q9Y3T6</accession>
<accession>B7ZLI1</accession>
<sequence length="440" mass="49092">MALLCLDGVFLSSAENDFVHRIQEELDRFLLQKQLSKVLLFPPLSSRLRYLIHRTAENFDLLSSFSVGEGWKRRTVICHQDIRVPSSDGLSGPCRAPASCPSRYHGPRPISNQGAAAVPRGARAGRWYRGRKPDQPLYVPRVLRRQEEWGLTSTSVLKREAPAGRDPEEPGDVGAGDPNSDQGLPVLMTQGTEDLKGPGQRCENEPLLDPVGPEPLGPESQSGKGDMVEMATRFGSTLQLDLEKGKESLLEKRLVAEEEEDEEEVEEDGPSSCSEDDYSELLQEITDNLTKKEIQIEKIHLDTSSFVEELPGEKDLAHVVEIYDFEPALKTEDLLATFSEFQEKGFRIQWVDDTHALGIFPCLASAAEALTREFSVLKIRPLTQGTKQSKLKALQRPKLLRLVKERPQTNATVARRLVARALGLQHKKKERPAVRGPLPP</sequence>
<comment type="alternative products">
    <event type="alternative splicing"/>
    <isoform>
        <id>Q9Y3T6-1</id>
        <name>1</name>
        <sequence type="displayed"/>
    </isoform>
    <isoform>
        <id>Q9Y3T6-3</id>
        <name>2</name>
        <sequence type="described" ref="VSP_058566"/>
    </isoform>
</comment>
<comment type="caution">
    <text evidence="5">Ribosome profiling data indicate that translation initiates from the non-AUG (CUG) codon used here.</text>
</comment>
<comment type="sequence caution" evidence="5">
    <conflict type="erroneous initiation">
        <sequence resource="EMBL-CDS" id="AAI43823"/>
    </conflict>
    <text>Truncated N-terminus.</text>
</comment>
<comment type="sequence caution" evidence="5">
    <conflict type="erroneous initiation">
        <sequence resource="EMBL-CDS" id="AAI43830"/>
    </conflict>
    <text>Truncated N-terminus.</text>
</comment>
<comment type="sequence caution" evidence="5">
    <conflict type="erroneous initiation">
        <sequence resource="EMBL-CDS" id="CAB43396"/>
    </conflict>
    <text>Truncated N-terminus.</text>
</comment>
<comment type="sequence caution" evidence="5">
    <conflict type="miscellaneous discrepancy">
        <sequence resource="EMBL-CDS" id="CAB43396"/>
    </conflict>
    <text>Contaminating sequence. Cloning artifact and potential poly-A sequence.</text>
</comment>
<comment type="sequence caution" evidence="5">
    <conflict type="erroneous gene model prediction">
        <sequence resource="EMBL-CDS" id="EAW63629"/>
    </conflict>
</comment>
<comment type="sequence caution" evidence="5">
    <conflict type="erroneous gene model prediction">
        <sequence resource="EMBL-CDS" id="EAW63630"/>
    </conflict>
</comment>
<proteinExistence type="evidence at protein level"/>
<feature type="chain" id="PRO_0000307389" description="R3H and coiled-coil domain-containing protein 1">
    <location>
        <begin position="1"/>
        <end position="440"/>
    </location>
</feature>
<feature type="domain" description="R3H" evidence="2">
    <location>
        <begin position="16"/>
        <end position="81"/>
    </location>
</feature>
<feature type="region of interest" description="Disordered" evidence="3">
    <location>
        <begin position="154"/>
        <end position="225"/>
    </location>
</feature>
<feature type="region of interest" description="Disordered" evidence="3">
    <location>
        <begin position="254"/>
        <end position="276"/>
    </location>
</feature>
<feature type="coiled-coil region" evidence="1">
    <location>
        <begin position="242"/>
        <end position="300"/>
    </location>
</feature>
<feature type="compositionally biased region" description="Basic and acidic residues" evidence="3">
    <location>
        <begin position="157"/>
        <end position="168"/>
    </location>
</feature>
<feature type="compositionally biased region" description="Acidic residues" evidence="3">
    <location>
        <begin position="257"/>
        <end position="276"/>
    </location>
</feature>
<feature type="modified residue" description="Phosphoserine" evidence="7">
    <location>
        <position position="236"/>
    </location>
</feature>
<feature type="splice variant" id="VSP_058566" description="In isoform 2." evidence="4">
    <location>
        <begin position="103"/>
        <end position="144"/>
    </location>
</feature>
<feature type="sequence variant" id="VAR_035420" description="In dbSNP:rs6980542.">
    <original>A</original>
    <variation>T</variation>
    <location>
        <position position="96"/>
    </location>
</feature>
<feature type="sequence variant" id="VAR_035421" description="In dbSNP:rs3808536.">
    <original>R</original>
    <variation>K</variation>
    <location>
        <position position="145"/>
    </location>
</feature>
<feature type="sequence variant" id="VAR_035422" description="In dbSNP:rs2272761.">
    <original>V</original>
    <variation>M</variation>
    <location>
        <position position="307"/>
    </location>
</feature>
<feature type="sequence variant" id="VAR_035423" description="In dbSNP:rs13530.">
    <original>L</original>
    <variation>R</variation>
    <location>
        <position position="363"/>
    </location>
</feature>
<evidence type="ECO:0000255" key="1"/>
<evidence type="ECO:0000255" key="2">
    <source>
        <dbReference type="PROSITE-ProRule" id="PRU00382"/>
    </source>
</evidence>
<evidence type="ECO:0000256" key="3">
    <source>
        <dbReference type="SAM" id="MobiDB-lite"/>
    </source>
</evidence>
<evidence type="ECO:0000303" key="4">
    <source>
    </source>
</evidence>
<evidence type="ECO:0000305" key="5"/>
<evidence type="ECO:0000312" key="6">
    <source>
        <dbReference type="HGNC" id="HGNC:27329"/>
    </source>
</evidence>
<evidence type="ECO:0007744" key="7">
    <source>
    </source>
</evidence>
<keyword id="KW-0025">Alternative splicing</keyword>
<keyword id="KW-0175">Coiled coil</keyword>
<keyword id="KW-0597">Phosphoprotein</keyword>
<keyword id="KW-1267">Proteomics identification</keyword>
<keyword id="KW-1185">Reference proteome</keyword>
<gene>
    <name evidence="6" type="primary">R3HCC1</name>
</gene>